<protein>
    <recommendedName>
        <fullName>Ras-related protein Rab-10</fullName>
        <ecNumber evidence="4">3.6.5.2</ecNumber>
    </recommendedName>
</protein>
<name>RAB10_PONAB</name>
<sequence length="200" mass="22541">MAKKTYDLLFKLLLIGDSGVGKTCVLFRFSDDAFNTTFISTIGIDFKIKTVELQGKKIKLQIWDTAGQERFHTITTSYYRGAMGIMLVYDITNGKSFENISKWLRNIDEHANEDVERMLLGNKCDMDDKRVVPKGKGEQIAREHGIRFFETSAKANINIEKAFLTLAEDILRKTPVKEPNSENVDISSGGGVTGWKSKCC</sequence>
<organism>
    <name type="scientific">Pongo abelii</name>
    <name type="common">Sumatran orangutan</name>
    <name type="synonym">Pongo pygmaeus abelii</name>
    <dbReference type="NCBI Taxonomy" id="9601"/>
    <lineage>
        <taxon>Eukaryota</taxon>
        <taxon>Metazoa</taxon>
        <taxon>Chordata</taxon>
        <taxon>Craniata</taxon>
        <taxon>Vertebrata</taxon>
        <taxon>Euteleostomi</taxon>
        <taxon>Mammalia</taxon>
        <taxon>Eutheria</taxon>
        <taxon>Euarchontoglires</taxon>
        <taxon>Primates</taxon>
        <taxon>Haplorrhini</taxon>
        <taxon>Catarrhini</taxon>
        <taxon>Hominidae</taxon>
        <taxon>Pongo</taxon>
    </lineage>
</organism>
<feature type="chain" id="PRO_0000260525" description="Ras-related protein Rab-10">
    <location>
        <begin position="1"/>
        <end position="200"/>
    </location>
</feature>
<feature type="short sequence motif" description="Switch 1" evidence="6">
    <location>
        <begin position="32"/>
        <end position="46"/>
    </location>
</feature>
<feature type="short sequence motif" description="Switch 2" evidence="6">
    <location>
        <begin position="64"/>
        <end position="81"/>
    </location>
</feature>
<feature type="binding site" evidence="4">
    <location>
        <position position="18"/>
    </location>
    <ligand>
        <name>GTP</name>
        <dbReference type="ChEBI" id="CHEBI:37565"/>
    </ligand>
</feature>
<feature type="binding site" evidence="4">
    <location>
        <position position="19"/>
    </location>
    <ligand>
        <name>GTP</name>
        <dbReference type="ChEBI" id="CHEBI:37565"/>
    </ligand>
</feature>
<feature type="binding site" evidence="4">
    <location>
        <position position="20"/>
    </location>
    <ligand>
        <name>GTP</name>
        <dbReference type="ChEBI" id="CHEBI:37565"/>
    </ligand>
</feature>
<feature type="binding site" evidence="4">
    <location>
        <position position="21"/>
    </location>
    <ligand>
        <name>GTP</name>
        <dbReference type="ChEBI" id="CHEBI:37565"/>
    </ligand>
</feature>
<feature type="binding site" evidence="4">
    <location>
        <position position="22"/>
    </location>
    <ligand>
        <name>GTP</name>
        <dbReference type="ChEBI" id="CHEBI:37565"/>
    </ligand>
</feature>
<feature type="binding site" evidence="4">
    <location>
        <position position="23"/>
    </location>
    <ligand>
        <name>GTP</name>
        <dbReference type="ChEBI" id="CHEBI:37565"/>
    </ligand>
</feature>
<feature type="binding site" evidence="4">
    <location>
        <position position="23"/>
    </location>
    <ligand>
        <name>Mg(2+)</name>
        <dbReference type="ChEBI" id="CHEBI:18420"/>
    </ligand>
</feature>
<feature type="binding site" evidence="4">
    <location>
        <position position="24"/>
    </location>
    <ligand>
        <name>GTP</name>
        <dbReference type="ChEBI" id="CHEBI:37565"/>
    </ligand>
</feature>
<feature type="binding site" evidence="4">
    <location>
        <position position="35"/>
    </location>
    <ligand>
        <name>GTP</name>
        <dbReference type="ChEBI" id="CHEBI:37565"/>
    </ligand>
</feature>
<feature type="binding site" evidence="4">
    <location>
        <position position="36"/>
    </location>
    <ligand>
        <name>GTP</name>
        <dbReference type="ChEBI" id="CHEBI:37565"/>
    </ligand>
</feature>
<feature type="binding site" evidence="4">
    <location>
        <position position="40"/>
    </location>
    <ligand>
        <name>GTP</name>
        <dbReference type="ChEBI" id="CHEBI:37565"/>
    </ligand>
</feature>
<feature type="binding site" evidence="4">
    <location>
        <position position="41"/>
    </location>
    <ligand>
        <name>GTP</name>
        <dbReference type="ChEBI" id="CHEBI:37565"/>
    </ligand>
</feature>
<feature type="binding site" evidence="4">
    <location>
        <position position="41"/>
    </location>
    <ligand>
        <name>Mg(2+)</name>
        <dbReference type="ChEBI" id="CHEBI:18420"/>
    </ligand>
</feature>
<feature type="binding site" evidence="4">
    <location>
        <position position="64"/>
    </location>
    <ligand>
        <name>Mg(2+)</name>
        <dbReference type="ChEBI" id="CHEBI:18420"/>
    </ligand>
</feature>
<feature type="binding site" evidence="4">
    <location>
        <position position="67"/>
    </location>
    <ligand>
        <name>GTP</name>
        <dbReference type="ChEBI" id="CHEBI:37565"/>
    </ligand>
</feature>
<feature type="binding site" evidence="4">
    <location>
        <position position="122"/>
    </location>
    <ligand>
        <name>GTP</name>
        <dbReference type="ChEBI" id="CHEBI:37565"/>
    </ligand>
</feature>
<feature type="binding site" evidence="4">
    <location>
        <position position="123"/>
    </location>
    <ligand>
        <name>GTP</name>
        <dbReference type="ChEBI" id="CHEBI:37565"/>
    </ligand>
</feature>
<feature type="binding site" evidence="4">
    <location>
        <position position="125"/>
    </location>
    <ligand>
        <name>GTP</name>
        <dbReference type="ChEBI" id="CHEBI:37565"/>
    </ligand>
</feature>
<feature type="binding site" evidence="4">
    <location>
        <position position="126"/>
    </location>
    <ligand>
        <name>GTP</name>
        <dbReference type="ChEBI" id="CHEBI:37565"/>
    </ligand>
</feature>
<feature type="binding site" evidence="4">
    <location>
        <position position="152"/>
    </location>
    <ligand>
        <name>GTP</name>
        <dbReference type="ChEBI" id="CHEBI:37565"/>
    </ligand>
</feature>
<feature type="binding site" evidence="4">
    <location>
        <position position="153"/>
    </location>
    <ligand>
        <name>GTP</name>
        <dbReference type="ChEBI" id="CHEBI:37565"/>
    </ligand>
</feature>
<feature type="binding site" evidence="4">
    <location>
        <position position="154"/>
    </location>
    <ligand>
        <name>GTP</name>
        <dbReference type="ChEBI" id="CHEBI:37565"/>
    </ligand>
</feature>
<feature type="modified residue" description="Phosphothreonine" evidence="4">
    <location>
        <position position="73"/>
    </location>
</feature>
<feature type="modified residue" description="N6-acetyllysine" evidence="4">
    <location>
        <position position="102"/>
    </location>
</feature>
<feature type="lipid moiety-binding region" description="S-geranylgeranyl cysteine" evidence="1">
    <location>
        <position position="199"/>
    </location>
</feature>
<feature type="lipid moiety-binding region" description="S-geranylgeranyl cysteine" evidence="1">
    <location>
        <position position="200"/>
    </location>
</feature>
<feature type="cross-link" description="Glycyl lysine isopeptide (Lys-Gly) (interchain with G-Cter in ubiquitin)" evidence="4">
    <location>
        <position position="102"/>
    </location>
</feature>
<feature type="cross-link" description="Glycyl lysine isopeptide (Lys-Gly) (interchain with G-Cter in ubiquitin)" evidence="4">
    <location>
        <position position="136"/>
    </location>
</feature>
<feature type="cross-link" description="Glycyl lysine isopeptide (Lys-Gly) (interchain with G-Cter in ubiquitin)" evidence="4">
    <location>
        <position position="154"/>
    </location>
</feature>
<feature type="sequence conflict" description="In Ref. 1; CAH91367." evidence="7" ref="1">
    <original>K</original>
    <variation>E</variation>
    <location>
        <position position="4"/>
    </location>
</feature>
<proteinExistence type="evidence at transcript level"/>
<reference key="1">
    <citation type="submission" date="2004-11" db="EMBL/GenBank/DDBJ databases">
        <authorList>
            <consortium name="The German cDNA consortium"/>
        </authorList>
    </citation>
    <scope>NUCLEOTIDE SEQUENCE [LARGE SCALE MRNA]</scope>
    <source>
        <tissue>Brain cortex</tissue>
    </source>
</reference>
<comment type="function">
    <text evidence="2 4 5">The small GTPases Rab are key regulators of intracellular membrane trafficking, from the formation of transport vesicles to their fusion with membranes (By similarity). Rabs cycle between an inactive GDP-bound form and an active GTP-bound form that is able to recruit to membranes different set of downstream effectors directly responsible for vesicle formation, movement, tethering and fusion (By similarity). That Rab is mainly involved in the biosynthetic transport of proteins from the Golgi to the plasma membrane (By similarity). Regulates, for instance, SLC2A4/GLUT4 glucose transporter-enriched vesicles delivery to the plasma membrane (By similarity). In parallel, it regulates the transport of TLR4, a toll-like receptor to the plasma membrane and therefore may be important for innate immune response (By similarity). Also plays a specific role in asymmetric protein transport to the plasma membranes (By similarity). In neurons, it is involved in axonogenesis through regulation of vesicular membrane trafficking toward the axonal plasma membrane. In epithelial cells, it regulates transport from the Golgi to the basolateral membrane (By similarity). May play a role in the basolateral recycling pathway and in phagosome maturation (By similarity). May play a role in endoplasmic reticulum dynamics and morphology controlling tubulation along microtubules and tubules fusion (By similarity). Together with LRRK2, RAB8A, and RILPL1, it regulates ciliogenesis (By similarity). When phosphorylated by LRRK2 on Thr-73, it binds RILPL1 and inhibits ciliogenesis (By similarity). Participates in the export of a subset of neosynthesized proteins through a Rab8-Rab10-Rab11-dependent endososomal export route (By similarity). Targeted to and stabilized on stressed lysosomes through LRRK2 phosphorylation where it promotes the extracellular release of lysosomal content through EHBP1 and EHNP1L1 effector proteins (By similarity).</text>
</comment>
<comment type="catalytic activity">
    <reaction evidence="4">
        <text>GTP + H2O = GDP + phosphate + H(+)</text>
        <dbReference type="Rhea" id="RHEA:19669"/>
        <dbReference type="ChEBI" id="CHEBI:15377"/>
        <dbReference type="ChEBI" id="CHEBI:15378"/>
        <dbReference type="ChEBI" id="CHEBI:37565"/>
        <dbReference type="ChEBI" id="CHEBI:43474"/>
        <dbReference type="ChEBI" id="CHEBI:58189"/>
        <dbReference type="EC" id="3.6.5.2"/>
    </reaction>
    <physiologicalReaction direction="left-to-right" evidence="4">
        <dbReference type="Rhea" id="RHEA:19670"/>
    </physiologicalReaction>
</comment>
<comment type="cofactor">
    <cofactor evidence="4">
        <name>Mg(2+)</name>
        <dbReference type="ChEBI" id="CHEBI:18420"/>
    </cofactor>
</comment>
<comment type="activity regulation">
    <text evidence="4">Regulated by guanine nucleotide exchange factors (GEFs) DENND4C and RABIF which promote the exchange of bound GDP for free GTP. Regulated by GTPase activating proteins (GAPs) including TBC1D21 which increase the GTP hydrolysis activity. Inhibited by GDP dissociation inhibitors GDI1 and GDI2 which prevent Rab-GDP dissociation.</text>
</comment>
<comment type="subunit">
    <text evidence="2 3 4 5">Interacts with MYO5A; mediates the transport to the plasma membrane of SLC2A4/GLUT4 storage vesicles (By similarity). Interacts with GDI1 and with GDI2; negatively regulates RAB10 association with membranes and activation (By similarity). Interacts (GDP-bound form) with LLGL1; the interaction is direct and promotes RAB10 association with membranes and activation through competition with the Rab inhibitor GDI1 (By similarity). Interacts with EXOC4; probably associates with the exocyst (By similarity). Interacts (GTP-bound form) with MICALCL, MICAL1, MICAL3, EHBP1 and EHBP1L1; at least in case of MICAL1 two molecules of RAB10 can bind to one molecule of MICAL1. Interacts with TBC1D13 (By similarity). Interacts with SEC16A (By similarity). Interacts with CHM and CHML (By similarity). Interacts with LRRK2; interaction facilitates phosphorylation of Thr-73 (By similarity). Interacts with RILPL1 and RILPL2 when phosphorylated on Thr-73 (By similarity). Interacts with TBC1D21 (By similarity). Interacts with MARCKS (By similarity).</text>
</comment>
<comment type="subcellular location">
    <subcellularLocation>
        <location evidence="7">Cytoplasmic vesicle membrane</location>
        <topology evidence="7">Lipid-anchor</topology>
        <orientation evidence="7">Cytoplasmic side</orientation>
    </subcellularLocation>
    <subcellularLocation>
        <location evidence="2">Golgi apparatus</location>
        <location evidence="2">trans-Golgi network membrane</location>
    </subcellularLocation>
    <subcellularLocation>
        <location evidence="4">Endosome membrane</location>
    </subcellularLocation>
    <subcellularLocation>
        <location evidence="2">Recycling endosome membrane</location>
    </subcellularLocation>
    <subcellularLocation>
        <location evidence="2">Cytoplasmic vesicle</location>
        <location evidence="2">Phagosome membrane</location>
    </subcellularLocation>
    <subcellularLocation>
        <location evidence="5">Cell projection</location>
        <location evidence="5">Cilium</location>
    </subcellularLocation>
    <subcellularLocation>
        <location evidence="5">Endoplasmic reticulum membrane</location>
    </subcellularLocation>
    <subcellularLocation>
        <location evidence="5">Cytoplasm</location>
        <location evidence="5">Perinuclear region</location>
    </subcellularLocation>
    <subcellularLocation>
        <location evidence="4">Lysosome</location>
    </subcellularLocation>
    <text evidence="2 4 5">Associates with SLC2A4/GLUT4 storage vesicles (By similarity). Localizes to the base of the cilium (By similarity). Transiently associates with phagosomes (By similarity). Localizes to the endoplasmic reticulum at domains of new tubule growth (By similarity). Localizes to enlarged lysosomes through LRRK2 phosphorylation (By similarity).</text>
</comment>
<comment type="domain">
    <text evidence="6">Switch 1, switch 2 and the interswitch regions are characteristic of Rab GTPases and mediate the interactions with Rab downstream effectors. The switch regions undergo conformational changes upon nucleotide binding which drives interaction with specific sets of effector proteins, with most effectors only binding to GTP-bound Rab.</text>
</comment>
<comment type="PTM">
    <text evidence="4">Phosphorylation of Thr-73 in the switch II region by LRRK2 prevents the association of RAB regulatory proteins, including CHM, CHML and RAB GDP dissociation inhibitors GDI1 and GDI2 (By similarity). Phosphorylation of Thr-73 by LRRK2 is stimulated by RAB29 and RAB32 (By similarity). Phosphorylation by LRRK2 is required for localization to stressed lysosomes (By similarity).</text>
</comment>
<comment type="similarity">
    <text evidence="7">Belongs to the small GTPase superfamily. Rab family.</text>
</comment>
<gene>
    <name type="primary">RAB10</name>
</gene>
<dbReference type="EC" id="3.6.5.2" evidence="4"/>
<dbReference type="EMBL" id="CR859178">
    <property type="protein sequence ID" value="CAH91367.1"/>
    <property type="molecule type" value="mRNA"/>
</dbReference>
<dbReference type="EMBL" id="CR860762">
    <property type="protein sequence ID" value="CAH92875.1"/>
    <property type="molecule type" value="mRNA"/>
</dbReference>
<dbReference type="RefSeq" id="NP_001126682.1">
    <property type="nucleotide sequence ID" value="NM_001133210.1"/>
</dbReference>
<dbReference type="SMR" id="Q5R5U1"/>
<dbReference type="FunCoup" id="Q5R5U1">
    <property type="interactions" value="2560"/>
</dbReference>
<dbReference type="STRING" id="9601.ENSPPYP00000014054"/>
<dbReference type="Ensembl" id="ENSPPYT00000014622.3">
    <property type="protein sequence ID" value="ENSPPYP00000014054.3"/>
    <property type="gene ID" value="ENSPPYG00000012586.3"/>
</dbReference>
<dbReference type="GeneID" id="100173682"/>
<dbReference type="KEGG" id="pon:100173682"/>
<dbReference type="CTD" id="10890"/>
<dbReference type="eggNOG" id="KOG0078">
    <property type="taxonomic scope" value="Eukaryota"/>
</dbReference>
<dbReference type="GeneTree" id="ENSGT00940000156975"/>
<dbReference type="HOGENOM" id="CLU_041217_23_1_1"/>
<dbReference type="InParanoid" id="Q5R5U1"/>
<dbReference type="OMA" id="ENIRTWF"/>
<dbReference type="OrthoDB" id="9989112at2759"/>
<dbReference type="Proteomes" id="UP000001595">
    <property type="component" value="Chromosome 2A"/>
</dbReference>
<dbReference type="GO" id="GO:0005929">
    <property type="term" value="C:cilium"/>
    <property type="evidence" value="ECO:0000250"/>
    <property type="project" value="UniProtKB"/>
</dbReference>
<dbReference type="GO" id="GO:0005789">
    <property type="term" value="C:endoplasmic reticulum membrane"/>
    <property type="evidence" value="ECO:0000250"/>
    <property type="project" value="UniProtKB"/>
</dbReference>
<dbReference type="GO" id="GO:0071782">
    <property type="term" value="C:endoplasmic reticulum tubular network"/>
    <property type="evidence" value="ECO:0000250"/>
    <property type="project" value="UniProtKB"/>
</dbReference>
<dbReference type="GO" id="GO:0005768">
    <property type="term" value="C:endosome"/>
    <property type="evidence" value="ECO:0000250"/>
    <property type="project" value="UniProtKB"/>
</dbReference>
<dbReference type="GO" id="GO:0010008">
    <property type="term" value="C:endosome membrane"/>
    <property type="evidence" value="ECO:0000250"/>
    <property type="project" value="UniProtKB"/>
</dbReference>
<dbReference type="GO" id="GO:0070382">
    <property type="term" value="C:exocytic vesicle"/>
    <property type="evidence" value="ECO:0007669"/>
    <property type="project" value="Ensembl"/>
</dbReference>
<dbReference type="GO" id="GO:0005794">
    <property type="term" value="C:Golgi apparatus"/>
    <property type="evidence" value="ECO:0000250"/>
    <property type="project" value="UniProtKB"/>
</dbReference>
<dbReference type="GO" id="GO:0032593">
    <property type="term" value="C:insulin-responsive compartment"/>
    <property type="evidence" value="ECO:0000250"/>
    <property type="project" value="UniProtKB"/>
</dbReference>
<dbReference type="GO" id="GO:0005764">
    <property type="term" value="C:lysosome"/>
    <property type="evidence" value="ECO:0007669"/>
    <property type="project" value="UniProtKB-SubCell"/>
</dbReference>
<dbReference type="GO" id="GO:0048471">
    <property type="term" value="C:perinuclear region of cytoplasm"/>
    <property type="evidence" value="ECO:0000250"/>
    <property type="project" value="UniProtKB"/>
</dbReference>
<dbReference type="GO" id="GO:0030670">
    <property type="term" value="C:phagocytic vesicle membrane"/>
    <property type="evidence" value="ECO:0007669"/>
    <property type="project" value="UniProtKB-SubCell"/>
</dbReference>
<dbReference type="GO" id="GO:0005886">
    <property type="term" value="C:plasma membrane"/>
    <property type="evidence" value="ECO:0007669"/>
    <property type="project" value="Ensembl"/>
</dbReference>
<dbReference type="GO" id="GO:0055037">
    <property type="term" value="C:recycling endosome"/>
    <property type="evidence" value="ECO:0000250"/>
    <property type="project" value="UniProtKB"/>
</dbReference>
<dbReference type="GO" id="GO:0055038">
    <property type="term" value="C:recycling endosome membrane"/>
    <property type="evidence" value="ECO:0007669"/>
    <property type="project" value="UniProtKB-SubCell"/>
</dbReference>
<dbReference type="GO" id="GO:0005802">
    <property type="term" value="C:trans-Golgi network"/>
    <property type="evidence" value="ECO:0000250"/>
    <property type="project" value="UniProtKB"/>
</dbReference>
<dbReference type="GO" id="GO:0003925">
    <property type="term" value="F:G protein activity"/>
    <property type="evidence" value="ECO:0007669"/>
    <property type="project" value="UniProtKB-EC"/>
</dbReference>
<dbReference type="GO" id="GO:0019003">
    <property type="term" value="F:GDP binding"/>
    <property type="evidence" value="ECO:0000250"/>
    <property type="project" value="UniProtKB"/>
</dbReference>
<dbReference type="GO" id="GO:0005525">
    <property type="term" value="F:GTP binding"/>
    <property type="evidence" value="ECO:0000250"/>
    <property type="project" value="UniProtKB"/>
</dbReference>
<dbReference type="GO" id="GO:0031489">
    <property type="term" value="F:myosin V binding"/>
    <property type="evidence" value="ECO:0007669"/>
    <property type="project" value="Ensembl"/>
</dbReference>
<dbReference type="GO" id="GO:0019882">
    <property type="term" value="P:antigen processing and presentation"/>
    <property type="evidence" value="ECO:0007669"/>
    <property type="project" value="Ensembl"/>
</dbReference>
<dbReference type="GO" id="GO:0007409">
    <property type="term" value="P:axonogenesis"/>
    <property type="evidence" value="ECO:0000250"/>
    <property type="project" value="UniProtKB"/>
</dbReference>
<dbReference type="GO" id="GO:0032869">
    <property type="term" value="P:cellular response to insulin stimulus"/>
    <property type="evidence" value="ECO:0000250"/>
    <property type="project" value="UniProtKB"/>
</dbReference>
<dbReference type="GO" id="GO:0071786">
    <property type="term" value="P:endoplasmic reticulum tubular network organization"/>
    <property type="evidence" value="ECO:0000250"/>
    <property type="project" value="UniProtKB"/>
</dbReference>
<dbReference type="GO" id="GO:0016197">
    <property type="term" value="P:endosomal transport"/>
    <property type="evidence" value="ECO:0000250"/>
    <property type="project" value="UniProtKB"/>
</dbReference>
<dbReference type="GO" id="GO:0045200">
    <property type="term" value="P:establishment of neuroblast polarity"/>
    <property type="evidence" value="ECO:0000250"/>
    <property type="project" value="UniProtKB"/>
</dbReference>
<dbReference type="GO" id="GO:0097051">
    <property type="term" value="P:establishment of protein localization to endoplasmic reticulum membrane"/>
    <property type="evidence" value="ECO:0000250"/>
    <property type="project" value="UniProtKB"/>
</dbReference>
<dbReference type="GO" id="GO:0043001">
    <property type="term" value="P:Golgi to plasma membrane protein transport"/>
    <property type="evidence" value="ECO:0000250"/>
    <property type="project" value="UniProtKB"/>
</dbReference>
<dbReference type="GO" id="GO:0006893">
    <property type="term" value="P:Golgi to plasma membrane transport"/>
    <property type="evidence" value="ECO:0000250"/>
    <property type="project" value="UniProtKB"/>
</dbReference>
<dbReference type="GO" id="GO:0030859">
    <property type="term" value="P:polarized epithelial cell differentiation"/>
    <property type="evidence" value="ECO:0000250"/>
    <property type="project" value="UniProtKB"/>
</dbReference>
<dbReference type="GO" id="GO:1903361">
    <property type="term" value="P:protein localization to basolateral plasma membrane"/>
    <property type="evidence" value="ECO:0000250"/>
    <property type="project" value="UniProtKB"/>
</dbReference>
<dbReference type="GO" id="GO:0072659">
    <property type="term" value="P:protein localization to plasma membrane"/>
    <property type="evidence" value="ECO:0000250"/>
    <property type="project" value="UniProtKB"/>
</dbReference>
<dbReference type="GO" id="GO:0045055">
    <property type="term" value="P:regulated exocytosis"/>
    <property type="evidence" value="ECO:0007669"/>
    <property type="project" value="Ensembl"/>
</dbReference>
<dbReference type="GO" id="GO:0016192">
    <property type="term" value="P:vesicle-mediated transport"/>
    <property type="evidence" value="ECO:0000250"/>
    <property type="project" value="UniProtKB"/>
</dbReference>
<dbReference type="CDD" id="cd01867">
    <property type="entry name" value="Rab8_Rab10_Rab13_like"/>
    <property type="match status" value="1"/>
</dbReference>
<dbReference type="FunFam" id="3.40.50.300:FF:000202">
    <property type="entry name" value="ras-related protein Rab-8A"/>
    <property type="match status" value="1"/>
</dbReference>
<dbReference type="Gene3D" id="3.40.50.300">
    <property type="entry name" value="P-loop containing nucleotide triphosphate hydrolases"/>
    <property type="match status" value="1"/>
</dbReference>
<dbReference type="InterPro" id="IPR027417">
    <property type="entry name" value="P-loop_NTPase"/>
</dbReference>
<dbReference type="InterPro" id="IPR005225">
    <property type="entry name" value="Small_GTP-bd"/>
</dbReference>
<dbReference type="InterPro" id="IPR001806">
    <property type="entry name" value="Small_GTPase"/>
</dbReference>
<dbReference type="InterPro" id="IPR050305">
    <property type="entry name" value="Small_GTPase_Rab"/>
</dbReference>
<dbReference type="NCBIfam" id="TIGR00231">
    <property type="entry name" value="small_GTP"/>
    <property type="match status" value="1"/>
</dbReference>
<dbReference type="PANTHER" id="PTHR47980">
    <property type="entry name" value="LD44762P"/>
    <property type="match status" value="1"/>
</dbReference>
<dbReference type="Pfam" id="PF00071">
    <property type="entry name" value="Ras"/>
    <property type="match status" value="1"/>
</dbReference>
<dbReference type="PRINTS" id="PR00449">
    <property type="entry name" value="RASTRNSFRMNG"/>
</dbReference>
<dbReference type="SMART" id="SM00177">
    <property type="entry name" value="ARF"/>
    <property type="match status" value="1"/>
</dbReference>
<dbReference type="SMART" id="SM00175">
    <property type="entry name" value="RAB"/>
    <property type="match status" value="1"/>
</dbReference>
<dbReference type="SMART" id="SM00176">
    <property type="entry name" value="RAN"/>
    <property type="match status" value="1"/>
</dbReference>
<dbReference type="SMART" id="SM00173">
    <property type="entry name" value="RAS"/>
    <property type="match status" value="1"/>
</dbReference>
<dbReference type="SMART" id="SM00174">
    <property type="entry name" value="RHO"/>
    <property type="match status" value="1"/>
</dbReference>
<dbReference type="SUPFAM" id="SSF52540">
    <property type="entry name" value="P-loop containing nucleoside triphosphate hydrolases"/>
    <property type="match status" value="1"/>
</dbReference>
<dbReference type="PROSITE" id="PS51419">
    <property type="entry name" value="RAB"/>
    <property type="match status" value="1"/>
</dbReference>
<evidence type="ECO:0000250" key="1"/>
<evidence type="ECO:0000250" key="2">
    <source>
        <dbReference type="UniProtKB" id="P24409"/>
    </source>
</evidence>
<evidence type="ECO:0000250" key="3">
    <source>
        <dbReference type="UniProtKB" id="P35281"/>
    </source>
</evidence>
<evidence type="ECO:0000250" key="4">
    <source>
        <dbReference type="UniProtKB" id="P61026"/>
    </source>
</evidence>
<evidence type="ECO:0000250" key="5">
    <source>
        <dbReference type="UniProtKB" id="P61027"/>
    </source>
</evidence>
<evidence type="ECO:0000250" key="6">
    <source>
        <dbReference type="UniProtKB" id="P62820"/>
    </source>
</evidence>
<evidence type="ECO:0000305" key="7"/>
<keyword id="KW-0007">Acetylation</keyword>
<keyword id="KW-0966">Cell projection</keyword>
<keyword id="KW-0963">Cytoplasm</keyword>
<keyword id="KW-0968">Cytoplasmic vesicle</keyword>
<keyword id="KW-0256">Endoplasmic reticulum</keyword>
<keyword id="KW-0967">Endosome</keyword>
<keyword id="KW-0333">Golgi apparatus</keyword>
<keyword id="KW-0342">GTP-binding</keyword>
<keyword id="KW-0378">Hydrolase</keyword>
<keyword id="KW-1017">Isopeptide bond</keyword>
<keyword id="KW-0449">Lipoprotein</keyword>
<keyword id="KW-0458">Lysosome</keyword>
<keyword id="KW-0460">Magnesium</keyword>
<keyword id="KW-0472">Membrane</keyword>
<keyword id="KW-0479">Metal-binding</keyword>
<keyword id="KW-0547">Nucleotide-binding</keyword>
<keyword id="KW-0597">Phosphoprotein</keyword>
<keyword id="KW-0636">Prenylation</keyword>
<keyword id="KW-0653">Protein transport</keyword>
<keyword id="KW-1185">Reference proteome</keyword>
<keyword id="KW-0813">Transport</keyword>
<keyword id="KW-0832">Ubl conjugation</keyword>
<accession>Q5R5U1</accession>
<accession>Q5RA43</accession>